<comment type="catalytic activity">
    <reaction evidence="1">
        <text>(S)-4-amino-5-oxopentanoate = 5-aminolevulinate</text>
        <dbReference type="Rhea" id="RHEA:14265"/>
        <dbReference type="ChEBI" id="CHEBI:57501"/>
        <dbReference type="ChEBI" id="CHEBI:356416"/>
        <dbReference type="EC" id="5.4.3.8"/>
    </reaction>
</comment>
<comment type="cofactor">
    <cofactor evidence="1">
        <name>pyridoxal 5'-phosphate</name>
        <dbReference type="ChEBI" id="CHEBI:597326"/>
    </cofactor>
</comment>
<comment type="pathway">
    <text evidence="1">Porphyrin-containing compound metabolism; protoporphyrin-IX biosynthesis; 5-aminolevulinate from L-glutamyl-tRNA(Glu): step 2/2.</text>
</comment>
<comment type="subunit">
    <text evidence="1">Homodimer.</text>
</comment>
<comment type="subcellular location">
    <subcellularLocation>
        <location evidence="1">Cytoplasm</location>
    </subcellularLocation>
</comment>
<comment type="similarity">
    <text evidence="1">Belongs to the class-III pyridoxal-phosphate-dependent aminotransferase family. HemL subfamily.</text>
</comment>
<organism>
    <name type="scientific">Staphylococcus aureus (strain MSSA476)</name>
    <dbReference type="NCBI Taxonomy" id="282459"/>
    <lineage>
        <taxon>Bacteria</taxon>
        <taxon>Bacillati</taxon>
        <taxon>Bacillota</taxon>
        <taxon>Bacilli</taxon>
        <taxon>Bacillales</taxon>
        <taxon>Staphylococcaceae</taxon>
        <taxon>Staphylococcus</taxon>
    </lineage>
</organism>
<keyword id="KW-0963">Cytoplasm</keyword>
<keyword id="KW-0413">Isomerase</keyword>
<keyword id="KW-0627">Porphyrin biosynthesis</keyword>
<keyword id="KW-0663">Pyridoxal phosphate</keyword>
<dbReference type="EC" id="5.4.3.8" evidence="1"/>
<dbReference type="EMBL" id="BX571857">
    <property type="protein sequence ID" value="CAG43591.1"/>
    <property type="molecule type" value="Genomic_DNA"/>
</dbReference>
<dbReference type="RefSeq" id="WP_001011599.1">
    <property type="nucleotide sequence ID" value="NC_002953.3"/>
</dbReference>
<dbReference type="SMR" id="Q6G870"/>
<dbReference type="KEGG" id="sas:SAS1786"/>
<dbReference type="HOGENOM" id="CLU_016922_1_5_9"/>
<dbReference type="UniPathway" id="UPA00251">
    <property type="reaction ID" value="UER00317"/>
</dbReference>
<dbReference type="GO" id="GO:0005737">
    <property type="term" value="C:cytoplasm"/>
    <property type="evidence" value="ECO:0007669"/>
    <property type="project" value="UniProtKB-SubCell"/>
</dbReference>
<dbReference type="GO" id="GO:0042286">
    <property type="term" value="F:glutamate-1-semialdehyde 2,1-aminomutase activity"/>
    <property type="evidence" value="ECO:0007669"/>
    <property type="project" value="UniProtKB-UniRule"/>
</dbReference>
<dbReference type="GO" id="GO:0030170">
    <property type="term" value="F:pyridoxal phosphate binding"/>
    <property type="evidence" value="ECO:0007669"/>
    <property type="project" value="InterPro"/>
</dbReference>
<dbReference type="GO" id="GO:0008483">
    <property type="term" value="F:transaminase activity"/>
    <property type="evidence" value="ECO:0007669"/>
    <property type="project" value="InterPro"/>
</dbReference>
<dbReference type="GO" id="GO:0006782">
    <property type="term" value="P:protoporphyrinogen IX biosynthetic process"/>
    <property type="evidence" value="ECO:0007669"/>
    <property type="project" value="UniProtKB-UniRule"/>
</dbReference>
<dbReference type="CDD" id="cd00610">
    <property type="entry name" value="OAT_like"/>
    <property type="match status" value="1"/>
</dbReference>
<dbReference type="FunFam" id="3.40.640.10:FF:000021">
    <property type="entry name" value="Glutamate-1-semialdehyde 2,1-aminomutase"/>
    <property type="match status" value="1"/>
</dbReference>
<dbReference type="Gene3D" id="3.90.1150.10">
    <property type="entry name" value="Aspartate Aminotransferase, domain 1"/>
    <property type="match status" value="1"/>
</dbReference>
<dbReference type="Gene3D" id="3.40.640.10">
    <property type="entry name" value="Type I PLP-dependent aspartate aminotransferase-like (Major domain)"/>
    <property type="match status" value="1"/>
</dbReference>
<dbReference type="HAMAP" id="MF_00375">
    <property type="entry name" value="HemL_aminotrans_3"/>
    <property type="match status" value="1"/>
</dbReference>
<dbReference type="InterPro" id="IPR004639">
    <property type="entry name" value="4pyrrol_synth_GluAld_NH2Trfase"/>
</dbReference>
<dbReference type="InterPro" id="IPR005814">
    <property type="entry name" value="Aminotrans_3"/>
</dbReference>
<dbReference type="InterPro" id="IPR049704">
    <property type="entry name" value="Aminotrans_3_PPA_site"/>
</dbReference>
<dbReference type="InterPro" id="IPR015424">
    <property type="entry name" value="PyrdxlP-dep_Trfase"/>
</dbReference>
<dbReference type="InterPro" id="IPR015421">
    <property type="entry name" value="PyrdxlP-dep_Trfase_major"/>
</dbReference>
<dbReference type="InterPro" id="IPR015422">
    <property type="entry name" value="PyrdxlP-dep_Trfase_small"/>
</dbReference>
<dbReference type="NCBIfam" id="TIGR00713">
    <property type="entry name" value="hemL"/>
    <property type="match status" value="1"/>
</dbReference>
<dbReference type="NCBIfam" id="NF000818">
    <property type="entry name" value="PRK00062.1"/>
    <property type="match status" value="1"/>
</dbReference>
<dbReference type="NCBIfam" id="NF009055">
    <property type="entry name" value="PRK12389.1"/>
    <property type="match status" value="1"/>
</dbReference>
<dbReference type="PANTHER" id="PTHR43713">
    <property type="entry name" value="GLUTAMATE-1-SEMIALDEHYDE 2,1-AMINOMUTASE"/>
    <property type="match status" value="1"/>
</dbReference>
<dbReference type="PANTHER" id="PTHR43713:SF1">
    <property type="entry name" value="GLUTAMATE-1-SEMIALDEHYDE 2,1-AMINOMUTASE 2"/>
    <property type="match status" value="1"/>
</dbReference>
<dbReference type="Pfam" id="PF00202">
    <property type="entry name" value="Aminotran_3"/>
    <property type="match status" value="1"/>
</dbReference>
<dbReference type="SUPFAM" id="SSF53383">
    <property type="entry name" value="PLP-dependent transferases"/>
    <property type="match status" value="1"/>
</dbReference>
<dbReference type="PROSITE" id="PS00600">
    <property type="entry name" value="AA_TRANSFER_CLASS_3"/>
    <property type="match status" value="1"/>
</dbReference>
<accession>Q6G870</accession>
<evidence type="ECO:0000255" key="1">
    <source>
        <dbReference type="HAMAP-Rule" id="MF_00375"/>
    </source>
</evidence>
<feature type="chain" id="PRO_0000120450" description="Glutamate-1-semialdehyde 2,1-aminomutase 2">
    <location>
        <begin position="1"/>
        <end position="429"/>
    </location>
</feature>
<feature type="modified residue" description="N6-(pyridoxal phosphate)lysine" evidence="1">
    <location>
        <position position="268"/>
    </location>
</feature>
<sequence length="429" mass="46756">MNFSESERLQQLSNEYILGGVNSPSRSYKAVGGGAPVVMKEGHGAYLYDVDGNKFIDYLQAYGPIITGHAHPHITKAIQEQAAKGVLFGTPTELEIEFSKKLRDAIPSLEKIRFVNSGTEAVMTTIRVARAYTKRNKIIKFAGSYHGHSDLVLVAAGSGPSQLGSPDSAGVPESVAREVITVPFNDINAYKEAIEFWGDEIAAVLVEPIVGNFGMVMPQPGFLEEVNEISHNNGTLVIYDEVITAFRFHYGAAQDLLGVIPDLTAFGKIVGGGLPIGGYGGRQDIMEQVAPLGPAYQAGTMAGNPLSMKAGIALLEVLEQDGVYEKLDSLGQQLEEGLLKLIEKHNITATINRIYGSLTLYFTDEKVTHYDQVEHSDGEAFGKFFKLMLNQGINLAPSKFEAWFLTTEHTEEDIQQTLKAADYAFSQMK</sequence>
<proteinExistence type="inferred from homology"/>
<gene>
    <name evidence="1" type="primary">hemL2</name>
    <name type="synonym">gsaB</name>
    <name type="ordered locus">SAS1786</name>
</gene>
<protein>
    <recommendedName>
        <fullName evidence="1">Glutamate-1-semialdehyde 2,1-aminomutase 2</fullName>
        <shortName evidence="1">GSA 2</shortName>
        <ecNumber evidence="1">5.4.3.8</ecNumber>
    </recommendedName>
    <alternativeName>
        <fullName evidence="1">Glutamate-1-semialdehyde aminotransferase 2</fullName>
        <shortName evidence="1">GSA-AT 2</shortName>
    </alternativeName>
</protein>
<reference key="1">
    <citation type="journal article" date="2004" name="Proc. Natl. Acad. Sci. U.S.A.">
        <title>Complete genomes of two clinical Staphylococcus aureus strains: evidence for the rapid evolution of virulence and drug resistance.</title>
        <authorList>
            <person name="Holden M.T.G."/>
            <person name="Feil E.J."/>
            <person name="Lindsay J.A."/>
            <person name="Peacock S.J."/>
            <person name="Day N.P.J."/>
            <person name="Enright M.C."/>
            <person name="Foster T.J."/>
            <person name="Moore C.E."/>
            <person name="Hurst L."/>
            <person name="Atkin R."/>
            <person name="Barron A."/>
            <person name="Bason N."/>
            <person name="Bentley S.D."/>
            <person name="Chillingworth C."/>
            <person name="Chillingworth T."/>
            <person name="Churcher C."/>
            <person name="Clark L."/>
            <person name="Corton C."/>
            <person name="Cronin A."/>
            <person name="Doggett J."/>
            <person name="Dowd L."/>
            <person name="Feltwell T."/>
            <person name="Hance Z."/>
            <person name="Harris B."/>
            <person name="Hauser H."/>
            <person name="Holroyd S."/>
            <person name="Jagels K."/>
            <person name="James K.D."/>
            <person name="Lennard N."/>
            <person name="Line A."/>
            <person name="Mayes R."/>
            <person name="Moule S."/>
            <person name="Mungall K."/>
            <person name="Ormond D."/>
            <person name="Quail M.A."/>
            <person name="Rabbinowitsch E."/>
            <person name="Rutherford K.M."/>
            <person name="Sanders M."/>
            <person name="Sharp S."/>
            <person name="Simmonds M."/>
            <person name="Stevens K."/>
            <person name="Whitehead S."/>
            <person name="Barrell B.G."/>
            <person name="Spratt B.G."/>
            <person name="Parkhill J."/>
        </authorList>
    </citation>
    <scope>NUCLEOTIDE SEQUENCE [LARGE SCALE GENOMIC DNA]</scope>
    <source>
        <strain>MSSA476</strain>
    </source>
</reference>
<name>GSA2_STAAS</name>